<accession>P11030</accession>
<accession>Q2V4X5</accession>
<accession>Q63160</accession>
<organism>
    <name type="scientific">Rattus norvegicus</name>
    <name type="common">Rat</name>
    <dbReference type="NCBI Taxonomy" id="10116"/>
    <lineage>
        <taxon>Eukaryota</taxon>
        <taxon>Metazoa</taxon>
        <taxon>Chordata</taxon>
        <taxon>Craniata</taxon>
        <taxon>Vertebrata</taxon>
        <taxon>Euteleostomi</taxon>
        <taxon>Mammalia</taxon>
        <taxon>Eutheria</taxon>
        <taxon>Euarchontoglires</taxon>
        <taxon>Glires</taxon>
        <taxon>Rodentia</taxon>
        <taxon>Myomorpha</taxon>
        <taxon>Muroidea</taxon>
        <taxon>Muridae</taxon>
        <taxon>Murinae</taxon>
        <taxon>Rattus</taxon>
    </lineage>
</organism>
<proteinExistence type="evidence at protein level"/>
<reference key="1">
    <citation type="journal article" date="1986" name="Proc. Natl. Acad. Sci. U.S.A.">
        <title>Putative diazepam binding inhibitor peptide: cDNA clones from rat.</title>
        <authorList>
            <person name="Mocchetti I."/>
            <person name="Einstein R."/>
            <person name="Brosius J."/>
        </authorList>
    </citation>
    <scope>NUCLEOTIDE SEQUENCE [MRNA]</scope>
    <source>
        <tissue>Brain</tissue>
    </source>
</reference>
<reference key="2">
    <citation type="journal article" date="1987" name="Neuropharmacology">
        <title>Molecular biology of diazepam binding inhibitor.</title>
        <authorList>
            <person name="Gray P.W."/>
        </authorList>
    </citation>
    <scope>NUCLEOTIDE SEQUENCE [MRNA]</scope>
</reference>
<reference key="3">
    <citation type="journal article" date="1992" name="J. Mol. Biol.">
        <title>Acyl-CoA-binding protein/diazepam-binding inhibitor gene and pseudogenes. A typical housekeeping gene family.</title>
        <authorList>
            <person name="Mandrup S."/>
            <person name="Hummel R."/>
            <person name="Ravn S."/>
            <person name="Jensen G."/>
            <person name="Andreasen P.H."/>
            <person name="Gregersen N."/>
            <person name="Knudsen J."/>
            <person name="Kristiansen K."/>
        </authorList>
    </citation>
    <scope>NUCLEOTIDE SEQUENCE [GENOMIC DNA]</scope>
    <source>
        <strain>Sprague-Dawley</strain>
    </source>
</reference>
<reference key="4">
    <citation type="journal article" date="1996" name="Gene">
        <title>Structure of the rat gene encoding the multifunctional acyl-CoA-binding protein: conservation of intron 1 sequences in rodents and man.</title>
        <authorList>
            <person name="Kroell J.B."/>
            <person name="Nohr J."/>
            <person name="Gregersen N."/>
            <person name="Kristiansen K."/>
            <person name="Mandrup S."/>
        </authorList>
    </citation>
    <scope>NUCLEOTIDE SEQUENCE [GENOMIC DNA]</scope>
    <source>
        <strain>Sprague-Dawley</strain>
    </source>
</reference>
<reference key="5">
    <citation type="journal article" date="2004" name="Genome Res.">
        <title>The status, quality, and expansion of the NIH full-length cDNA project: the Mammalian Gene Collection (MGC).</title>
        <authorList>
            <consortium name="The MGC Project Team"/>
        </authorList>
    </citation>
    <scope>NUCLEOTIDE SEQUENCE [LARGE SCALE MRNA]</scope>
    <source>
        <tissue>Ovary</tissue>
    </source>
</reference>
<reference key="6">
    <citation type="journal article" date="1993" name="Proc. Natl. Acad. Sci. U.S.A.">
        <title>Cloning and tissue-specific functional characterization of the promoter of the rat diazepam binding inhibitor, a peptide with multiple biological actions.</title>
        <authorList>
            <person name="Kolmer M."/>
            <person name="Alho H."/>
            <person name="Costa E."/>
            <person name="Pani L."/>
        </authorList>
    </citation>
    <scope>NUCLEOTIDE SEQUENCE [GENOMIC DNA] OF 1-42</scope>
</reference>
<reference key="7">
    <citation type="journal article" date="1989" name="Biochem. J.">
        <title>Acyl-CoA-binding protein in the rat. Purification, binding characteristics, tissue concentrations and amino acid sequence.</title>
        <authorList>
            <person name="Knudsen J."/>
            <person name="Hoejrup P."/>
            <person name="Hansen H.O."/>
            <person name="Hansen H.F."/>
            <person name="Roepstorff P."/>
        </authorList>
    </citation>
    <scope>PROTEIN SEQUENCE OF 2-87</scope>
    <scope>ACETYLATION AT SER-2</scope>
    <source>
        <strain>Sprague-Dawley</strain>
        <tissue>Liver</tissue>
    </source>
</reference>
<reference key="8">
    <citation type="journal article" date="1989" name="J. Neurochem.">
        <title>Isolation and characterization of a rat brain triakontatetraneuropeptide, a posttranslational product of diazepam binding inhibitor: specific action at the Ro 5-4864 recognition site.</title>
        <authorList>
            <person name="Slobodyansky E."/>
            <person name="Guidotti A."/>
            <person name="Wambebe C."/>
            <person name="Berkovich A."/>
            <person name="Costa E."/>
        </authorList>
    </citation>
    <scope>PROTEIN SEQUENCE OF 18-51</scope>
    <source>
        <tissue>Brain</tissue>
    </source>
</reference>
<reference key="9">
    <citation type="submission" date="2007-04" db="UniProtKB">
        <authorList>
            <person name="Lubec G."/>
            <person name="Diao W."/>
        </authorList>
    </citation>
    <scope>PROTEIN SEQUENCE OF 34-51</scope>
    <scope>IDENTIFICATION BY MASS SPECTROMETRY</scope>
    <source>
        <strain>Sprague-Dawley</strain>
        <tissue>Hippocampus</tissue>
    </source>
</reference>
<protein>
    <recommendedName>
        <fullName>Acyl-CoA-binding protein</fullName>
        <shortName>ACBP</shortName>
    </recommendedName>
    <alternativeName>
        <fullName>Diazepam-binding inhibitor</fullName>
        <shortName>DBI</shortName>
    </alternativeName>
    <alternativeName>
        <fullName>Endozepine</fullName>
        <shortName>EP</shortName>
    </alternativeName>
    <component>
        <recommendedName>
            <fullName>Triakontatetraneuropeptide</fullName>
            <shortName>TTN</shortName>
        </recommendedName>
    </component>
    <component>
        <recommendedName>
            <fullName>Octadecaneuropeptide</fullName>
            <shortName>ODN</shortName>
        </recommendedName>
    </component>
</protein>
<dbReference type="EMBL" id="M14201">
    <property type="protein sequence ID" value="AAA41078.1"/>
    <property type="molecule type" value="mRNA"/>
</dbReference>
<dbReference type="EMBL" id="M20268">
    <property type="protein sequence ID" value="AAA41079.1"/>
    <property type="molecule type" value="mRNA"/>
</dbReference>
<dbReference type="EMBL" id="Z11991">
    <property type="status" value="NOT_ANNOTATED_CDS"/>
    <property type="molecule type" value="Genomic_DNA"/>
</dbReference>
<dbReference type="EMBL" id="S51442">
    <property type="protein sequence ID" value="AAA12824.1"/>
    <property type="molecule type" value="Genomic_DNA"/>
</dbReference>
<dbReference type="EMBL" id="S51427">
    <property type="protein sequence ID" value="AAA12824.1"/>
    <property type="status" value="JOINED"/>
    <property type="molecule type" value="Genomic_DNA"/>
</dbReference>
<dbReference type="EMBL" id="S51426">
    <property type="protein sequence ID" value="AAA12824.1"/>
    <property type="status" value="JOINED"/>
    <property type="molecule type" value="Genomic_DNA"/>
</dbReference>
<dbReference type="EMBL" id="X96560">
    <property type="protein sequence ID" value="CAA65396.1"/>
    <property type="molecule type" value="Genomic_DNA"/>
</dbReference>
<dbReference type="EMBL" id="BC084717">
    <property type="protein sequence ID" value="AAH84717.1"/>
    <property type="molecule type" value="mRNA"/>
</dbReference>
<dbReference type="EMBL" id="Z21846">
    <property type="protein sequence ID" value="CAA79894.1"/>
    <property type="molecule type" value="Genomic_DNA"/>
</dbReference>
<dbReference type="PIR" id="S27345">
    <property type="entry name" value="NZRT"/>
</dbReference>
<dbReference type="RefSeq" id="NP_114054.1">
    <property type="nucleotide sequence ID" value="NM_031853.4"/>
</dbReference>
<dbReference type="SMR" id="P11030"/>
<dbReference type="BioGRID" id="247122">
    <property type="interactions" value="1"/>
</dbReference>
<dbReference type="DIP" id="DIP-1164N"/>
<dbReference type="FunCoup" id="P11030">
    <property type="interactions" value="1925"/>
</dbReference>
<dbReference type="IntAct" id="P11030">
    <property type="interactions" value="2"/>
</dbReference>
<dbReference type="STRING" id="10116.ENSRNOP00000066874"/>
<dbReference type="iPTMnet" id="P11030"/>
<dbReference type="PhosphoSitePlus" id="P11030"/>
<dbReference type="jPOST" id="P11030"/>
<dbReference type="PaxDb" id="10116-ENSRNOP00000066874"/>
<dbReference type="GeneID" id="25045"/>
<dbReference type="KEGG" id="rno:25045"/>
<dbReference type="AGR" id="RGD:2490"/>
<dbReference type="CTD" id="1622"/>
<dbReference type="RGD" id="2490">
    <property type="gene designation" value="Dbi"/>
</dbReference>
<dbReference type="VEuPathDB" id="HostDB:ENSRNOG00000046889"/>
<dbReference type="eggNOG" id="KOG0817">
    <property type="taxonomic scope" value="Eukaryota"/>
</dbReference>
<dbReference type="HOGENOM" id="CLU_118853_4_1_1"/>
<dbReference type="InParanoid" id="P11030"/>
<dbReference type="OrthoDB" id="62904at9989"/>
<dbReference type="Reactome" id="R-RNO-77289">
    <property type="pathway name" value="Mitochondrial Fatty Acid Beta-Oxidation"/>
</dbReference>
<dbReference type="PRO" id="PR:P11030"/>
<dbReference type="Proteomes" id="UP000002494">
    <property type="component" value="Chromosome 13"/>
</dbReference>
<dbReference type="Bgee" id="ENSRNOG00000046889">
    <property type="expression patterns" value="Expressed in duodenum and 20 other cell types or tissues"/>
</dbReference>
<dbReference type="ExpressionAtlas" id="P11030">
    <property type="expression patterns" value="baseline and differential"/>
</dbReference>
<dbReference type="GO" id="GO:0043292">
    <property type="term" value="C:contractile muscle fiber"/>
    <property type="evidence" value="ECO:0000314"/>
    <property type="project" value="RGD"/>
</dbReference>
<dbReference type="GO" id="GO:0005783">
    <property type="term" value="C:endoplasmic reticulum"/>
    <property type="evidence" value="ECO:0000266"/>
    <property type="project" value="RGD"/>
</dbReference>
<dbReference type="GO" id="GO:0005615">
    <property type="term" value="C:extracellular space"/>
    <property type="evidence" value="ECO:0000314"/>
    <property type="project" value="MGI"/>
</dbReference>
<dbReference type="GO" id="GO:0005794">
    <property type="term" value="C:Golgi apparatus"/>
    <property type="evidence" value="ECO:0000266"/>
    <property type="project" value="RGD"/>
</dbReference>
<dbReference type="GO" id="GO:0032994">
    <property type="term" value="C:protein-lipid complex"/>
    <property type="evidence" value="ECO:0000266"/>
    <property type="project" value="RGD"/>
</dbReference>
<dbReference type="GO" id="GO:0008021">
    <property type="term" value="C:synaptic vesicle"/>
    <property type="evidence" value="ECO:0000314"/>
    <property type="project" value="MGI"/>
</dbReference>
<dbReference type="GO" id="GO:0030156">
    <property type="term" value="F:benzodiazepine receptor binding"/>
    <property type="evidence" value="ECO:0000314"/>
    <property type="project" value="RGD"/>
</dbReference>
<dbReference type="GO" id="GO:0000062">
    <property type="term" value="F:fatty-acyl-CoA binding"/>
    <property type="evidence" value="ECO:0000353"/>
    <property type="project" value="RGD"/>
</dbReference>
<dbReference type="GO" id="GO:0042802">
    <property type="term" value="F:identical protein binding"/>
    <property type="evidence" value="ECO:0000266"/>
    <property type="project" value="RGD"/>
</dbReference>
<dbReference type="GO" id="GO:0036042">
    <property type="term" value="F:long-chain fatty acyl-CoA binding"/>
    <property type="evidence" value="ECO:0000266"/>
    <property type="project" value="RGD"/>
</dbReference>
<dbReference type="GO" id="GO:0006637">
    <property type="term" value="P:acyl-CoA metabolic process"/>
    <property type="evidence" value="ECO:0000304"/>
    <property type="project" value="RGD"/>
</dbReference>
<dbReference type="GO" id="GO:0001662">
    <property type="term" value="P:behavioral fear response"/>
    <property type="evidence" value="ECO:0000266"/>
    <property type="project" value="RGD"/>
</dbReference>
<dbReference type="GO" id="GO:0031670">
    <property type="term" value="P:cellular response to nutrient"/>
    <property type="evidence" value="ECO:0000270"/>
    <property type="project" value="RGD"/>
</dbReference>
<dbReference type="GO" id="GO:1990708">
    <property type="term" value="P:conditioned place preference"/>
    <property type="evidence" value="ECO:0000270"/>
    <property type="project" value="RGD"/>
</dbReference>
<dbReference type="GO" id="GO:0006631">
    <property type="term" value="P:fatty acid metabolic process"/>
    <property type="evidence" value="ECO:0000318"/>
    <property type="project" value="GO_Central"/>
</dbReference>
<dbReference type="GO" id="GO:0014009">
    <property type="term" value="P:glial cell proliferation"/>
    <property type="evidence" value="ECO:0000314"/>
    <property type="project" value="RGD"/>
</dbReference>
<dbReference type="GO" id="GO:0001942">
    <property type="term" value="P:hair follicle development"/>
    <property type="evidence" value="ECO:0000266"/>
    <property type="project" value="RGD"/>
</dbReference>
<dbReference type="GO" id="GO:0021670">
    <property type="term" value="P:lateral ventricle development"/>
    <property type="evidence" value="ECO:0000266"/>
    <property type="project" value="RGD"/>
</dbReference>
<dbReference type="GO" id="GO:0007611">
    <property type="term" value="P:learning or memory"/>
    <property type="evidence" value="ECO:0000266"/>
    <property type="project" value="RGD"/>
</dbReference>
<dbReference type="GO" id="GO:0060291">
    <property type="term" value="P:long-term synaptic potentiation"/>
    <property type="evidence" value="ECO:0000266"/>
    <property type="project" value="RGD"/>
</dbReference>
<dbReference type="GO" id="GO:0031999">
    <property type="term" value="P:negative regulation of fatty acid beta-oxidation"/>
    <property type="evidence" value="ECO:0000314"/>
    <property type="project" value="RGD"/>
</dbReference>
<dbReference type="GO" id="GO:0036151">
    <property type="term" value="P:phosphatidylcholine acyl-chain remodeling"/>
    <property type="evidence" value="ECO:0000266"/>
    <property type="project" value="RGD"/>
</dbReference>
<dbReference type="GO" id="GO:0046889">
    <property type="term" value="P:positive regulation of lipid biosynthetic process"/>
    <property type="evidence" value="ECO:0000314"/>
    <property type="project" value="RGD"/>
</dbReference>
<dbReference type="GO" id="GO:2001140">
    <property type="term" value="P:positive regulation of phospholipid transport"/>
    <property type="evidence" value="ECO:0000266"/>
    <property type="project" value="RGD"/>
</dbReference>
<dbReference type="GO" id="GO:0051281">
    <property type="term" value="P:positive regulation of release of sequestered calcium ion into cytosol"/>
    <property type="evidence" value="ECO:0000315"/>
    <property type="project" value="RGD"/>
</dbReference>
<dbReference type="GO" id="GO:0032228">
    <property type="term" value="P:regulation of synaptic transmission, GABAergic"/>
    <property type="evidence" value="ECO:0000314"/>
    <property type="project" value="MGI"/>
</dbReference>
<dbReference type="GO" id="GO:0043588">
    <property type="term" value="P:skin development"/>
    <property type="evidence" value="ECO:0000266"/>
    <property type="project" value="RGD"/>
</dbReference>
<dbReference type="GO" id="GO:0006694">
    <property type="term" value="P:steroid biosynthetic process"/>
    <property type="evidence" value="ECO:0000304"/>
    <property type="project" value="RGD"/>
</dbReference>
<dbReference type="GO" id="GO:0006641">
    <property type="term" value="P:triglyceride metabolic process"/>
    <property type="evidence" value="ECO:0000266"/>
    <property type="project" value="RGD"/>
</dbReference>
<dbReference type="CDD" id="cd00435">
    <property type="entry name" value="ACBP"/>
    <property type="match status" value="1"/>
</dbReference>
<dbReference type="FunFam" id="1.20.80.10:FF:000010">
    <property type="entry name" value="Acyl-CoA-binding domain-containing protein 5"/>
    <property type="match status" value="1"/>
</dbReference>
<dbReference type="Gene3D" id="1.20.80.10">
    <property type="match status" value="1"/>
</dbReference>
<dbReference type="InterPro" id="IPR022408">
    <property type="entry name" value="Acyl-CoA-binding_prot_CS"/>
</dbReference>
<dbReference type="InterPro" id="IPR000582">
    <property type="entry name" value="Acyl-CoA-binding_protein"/>
</dbReference>
<dbReference type="InterPro" id="IPR035984">
    <property type="entry name" value="Acyl-CoA-binding_sf"/>
</dbReference>
<dbReference type="InterPro" id="IPR014352">
    <property type="entry name" value="FERM/acyl-CoA-bd_prot_sf"/>
</dbReference>
<dbReference type="PANTHER" id="PTHR23310:SF54">
    <property type="entry name" value="ACYL-COA-BINDING PROTEIN"/>
    <property type="match status" value="1"/>
</dbReference>
<dbReference type="PANTHER" id="PTHR23310">
    <property type="entry name" value="ACYL-COA-BINDING PROTEIN, ACBP"/>
    <property type="match status" value="1"/>
</dbReference>
<dbReference type="Pfam" id="PF00887">
    <property type="entry name" value="ACBP"/>
    <property type="match status" value="1"/>
</dbReference>
<dbReference type="PRINTS" id="PR00689">
    <property type="entry name" value="ACOABINDINGP"/>
</dbReference>
<dbReference type="SUPFAM" id="SSF47027">
    <property type="entry name" value="Acyl-CoA binding protein"/>
    <property type="match status" value="1"/>
</dbReference>
<dbReference type="PROSITE" id="PS00880">
    <property type="entry name" value="ACB_1"/>
    <property type="match status" value="1"/>
</dbReference>
<dbReference type="PROSITE" id="PS51228">
    <property type="entry name" value="ACB_2"/>
    <property type="match status" value="1"/>
</dbReference>
<comment type="function">
    <text>Binds medium- and long-chain acyl-CoA esters with very high affinity and may function as an intracellular carrier of acyl-CoA esters. It is also able to displace diazepam from the benzodiazepine (BZD) recognition site located on the GABA type A receptor. It is therefore possible that this protein also acts as a neuropeptide to modulate the action of the GABA receptor.</text>
</comment>
<comment type="subunit">
    <text>Monomer.</text>
</comment>
<comment type="subcellular location">
    <subcellularLocation>
        <location evidence="2">Endoplasmic reticulum</location>
    </subcellularLocation>
    <subcellularLocation>
        <location evidence="2">Golgi apparatus</location>
    </subcellularLocation>
    <text evidence="2">Golgi localization is dependent on ligand binding.</text>
</comment>
<comment type="similarity">
    <text evidence="7">Belongs to the ACBP family.</text>
</comment>
<gene>
    <name type="primary">Dbi</name>
</gene>
<feature type="initiator methionine" description="Removed" evidence="6">
    <location>
        <position position="1"/>
    </location>
</feature>
<feature type="chain" id="PRO_0000045273" description="Acyl-CoA-binding protein">
    <location>
        <begin position="2"/>
        <end position="87"/>
    </location>
</feature>
<feature type="peptide" id="PRO_0000000288" description="Triakontatetraneuropeptide" evidence="5">
    <location>
        <begin position="18"/>
        <end position="51"/>
    </location>
</feature>
<feature type="peptide" id="PRO_0000000289" description="Octadecaneuropeptide">
    <location>
        <begin position="34"/>
        <end position="51"/>
    </location>
</feature>
<feature type="domain" description="ACB" evidence="4">
    <location>
        <begin position="2"/>
        <end position="87"/>
    </location>
</feature>
<feature type="binding site" evidence="1">
    <location>
        <position position="14"/>
    </location>
    <ligand>
        <name>an acyl-CoA</name>
        <dbReference type="ChEBI" id="CHEBI:58342"/>
    </ligand>
</feature>
<feature type="binding site" evidence="1">
    <location>
        <begin position="29"/>
        <end position="33"/>
    </location>
    <ligand>
        <name>an acyl-CoA</name>
        <dbReference type="ChEBI" id="CHEBI:58342"/>
    </ligand>
</feature>
<feature type="binding site" evidence="1">
    <location>
        <position position="51"/>
    </location>
    <ligand>
        <name>an acyl-CoA</name>
        <dbReference type="ChEBI" id="CHEBI:58342"/>
    </ligand>
</feature>
<feature type="binding site" evidence="1">
    <location>
        <position position="55"/>
    </location>
    <ligand>
        <name>an acyl-CoA</name>
        <dbReference type="ChEBI" id="CHEBI:58342"/>
    </ligand>
</feature>
<feature type="binding site" evidence="1">
    <location>
        <position position="74"/>
    </location>
    <ligand>
        <name>an acyl-CoA</name>
        <dbReference type="ChEBI" id="CHEBI:58342"/>
    </ligand>
</feature>
<feature type="modified residue" description="N-acetylserine" evidence="6">
    <location>
        <position position="2"/>
    </location>
</feature>
<feature type="modified residue" description="N6-acetyllysine; alternate" evidence="2">
    <location>
        <position position="8"/>
    </location>
</feature>
<feature type="modified residue" description="N6-succinyllysine; alternate" evidence="3">
    <location>
        <position position="8"/>
    </location>
</feature>
<feature type="modified residue" description="N6-succinyllysine" evidence="3">
    <location>
        <position position="17"/>
    </location>
</feature>
<feature type="modified residue" description="Phosphotyrosine" evidence="2">
    <location>
        <position position="29"/>
    </location>
</feature>
<feature type="modified residue" description="N6-acetyllysine" evidence="3">
    <location>
        <position position="51"/>
    </location>
</feature>
<feature type="modified residue" description="N6-(2-hydroxyisobutyryl)lysine; alternate" evidence="2">
    <location>
        <position position="55"/>
    </location>
</feature>
<feature type="modified residue" description="N6-acetyllysine; alternate" evidence="2">
    <location>
        <position position="55"/>
    </location>
</feature>
<feature type="modified residue" description="N6-malonyllysine; alternate" evidence="1">
    <location>
        <position position="55"/>
    </location>
</feature>
<feature type="modified residue" description="N6-succinyllysine; alternate" evidence="3">
    <location>
        <position position="55"/>
    </location>
</feature>
<feature type="modified residue" description="N6-acetyllysine; alternate" evidence="2">
    <location>
        <position position="77"/>
    </location>
</feature>
<feature type="modified residue" description="N6-succinyllysine; alternate" evidence="3">
    <location>
        <position position="77"/>
    </location>
</feature>
<keyword id="KW-0007">Acetylation</keyword>
<keyword id="KW-0903">Direct protein sequencing</keyword>
<keyword id="KW-0256">Endoplasmic reticulum</keyword>
<keyword id="KW-0333">Golgi apparatus</keyword>
<keyword id="KW-0379">Hydroxylation</keyword>
<keyword id="KW-0446">Lipid-binding</keyword>
<keyword id="KW-0597">Phosphoprotein</keyword>
<keyword id="KW-1185">Reference proteome</keyword>
<keyword id="KW-0813">Transport</keyword>
<evidence type="ECO:0000250" key="1"/>
<evidence type="ECO:0000250" key="2">
    <source>
        <dbReference type="UniProtKB" id="P07108"/>
    </source>
</evidence>
<evidence type="ECO:0000250" key="3">
    <source>
        <dbReference type="UniProtKB" id="P31786"/>
    </source>
</evidence>
<evidence type="ECO:0000255" key="4">
    <source>
        <dbReference type="PROSITE-ProRule" id="PRU00573"/>
    </source>
</evidence>
<evidence type="ECO:0000269" key="5">
    <source>
    </source>
</evidence>
<evidence type="ECO:0000269" key="6">
    <source>
    </source>
</evidence>
<evidence type="ECO:0000305" key="7"/>
<name>ACBP_RAT</name>
<sequence length="87" mass="10027">MSQADFDKAAEEVKRLKTQPTDEEMLFIYSHFKQATVGDVNTDRPGLLDLKGKAKWDSWNKLKGTSKENAMKTYVEKVEELKKKYGI</sequence>